<name>CP2BJ_MOUSE</name>
<protein>
    <recommendedName>
        <fullName>Cytochrome P450 2B19</fullName>
        <ecNumber>1.14.14.1</ecNumber>
    </recommendedName>
    <alternativeName>
        <fullName>CYPIIB19</fullName>
    </alternativeName>
</protein>
<gene>
    <name type="primary">Cyp2b19</name>
</gene>
<feature type="chain" id="PRO_0000051689" description="Cytochrome P450 2B19">
    <location>
        <begin position="1"/>
        <end position="492"/>
    </location>
</feature>
<feature type="binding site" description="axial binding residue" evidence="1">
    <location>
        <position position="437"/>
    </location>
    <ligand>
        <name>heme</name>
        <dbReference type="ChEBI" id="CHEBI:30413"/>
    </ligand>
    <ligandPart>
        <name>Fe</name>
        <dbReference type="ChEBI" id="CHEBI:18248"/>
    </ligandPart>
</feature>
<feature type="modified residue" description="Phosphoserine; by PKA" evidence="2">
    <location>
        <position position="129"/>
    </location>
</feature>
<reference key="1">
    <citation type="journal article" date="1998" name="Genomics">
        <title>The novel skin-specific cytochrome P450 Cyp2b19 maps to proximal chromosome 7 in the mouse, near a cluster of Cyp2 family genes.</title>
        <authorList>
            <person name="Keeney D.S."/>
        </authorList>
    </citation>
    <scope>NUCLEOTIDE SEQUENCE [MRNA]</scope>
    <source>
        <strain>C57BL/6J</strain>
        <tissue>Skin</tissue>
    </source>
</reference>
<reference key="2">
    <citation type="journal article" date="2004" name="Genome Res.">
        <title>The status, quality, and expansion of the NIH full-length cDNA project: the Mammalian Gene Collection (MGC).</title>
        <authorList>
            <consortium name="The MGC Project Team"/>
        </authorList>
    </citation>
    <scope>NUCLEOTIDE SEQUENCE [LARGE SCALE MRNA]</scope>
    <source>
        <tissue>Brain</tissue>
    </source>
</reference>
<organism>
    <name type="scientific">Mus musculus</name>
    <name type="common">Mouse</name>
    <dbReference type="NCBI Taxonomy" id="10090"/>
    <lineage>
        <taxon>Eukaryota</taxon>
        <taxon>Metazoa</taxon>
        <taxon>Chordata</taxon>
        <taxon>Craniata</taxon>
        <taxon>Vertebrata</taxon>
        <taxon>Euteleostomi</taxon>
        <taxon>Mammalia</taxon>
        <taxon>Eutheria</taxon>
        <taxon>Euarchontoglires</taxon>
        <taxon>Glires</taxon>
        <taxon>Rodentia</taxon>
        <taxon>Myomorpha</taxon>
        <taxon>Muroidea</taxon>
        <taxon>Muridae</taxon>
        <taxon>Murinae</taxon>
        <taxon>Mus</taxon>
        <taxon>Mus</taxon>
    </lineage>
</organism>
<dbReference type="EC" id="1.14.14.1"/>
<dbReference type="EMBL" id="AF047529">
    <property type="protein sequence ID" value="AAC78770.1"/>
    <property type="molecule type" value="mRNA"/>
</dbReference>
<dbReference type="EMBL" id="BC137965">
    <property type="protein sequence ID" value="AAI37966.1"/>
    <property type="molecule type" value="mRNA"/>
</dbReference>
<dbReference type="EMBL" id="BC137966">
    <property type="protein sequence ID" value="AAI37967.1"/>
    <property type="molecule type" value="mRNA"/>
</dbReference>
<dbReference type="CCDS" id="CCDS21006.1"/>
<dbReference type="RefSeq" id="NP_031840.1">
    <property type="nucleotide sequence ID" value="NM_007814.2"/>
</dbReference>
<dbReference type="SMR" id="O55071"/>
<dbReference type="FunCoup" id="O55071">
    <property type="interactions" value="1436"/>
</dbReference>
<dbReference type="STRING" id="10090.ENSMUSP00000077021"/>
<dbReference type="iPTMnet" id="O55071"/>
<dbReference type="PhosphoSitePlus" id="O55071"/>
<dbReference type="jPOST" id="O55071"/>
<dbReference type="PaxDb" id="10090-ENSMUSP00000077021"/>
<dbReference type="PeptideAtlas" id="O55071"/>
<dbReference type="ProteomicsDB" id="283615"/>
<dbReference type="DNASU" id="13090"/>
<dbReference type="Ensembl" id="ENSMUST00000077855.8">
    <property type="protein sequence ID" value="ENSMUSP00000077021.7"/>
    <property type="gene ID" value="ENSMUSG00000066704.7"/>
</dbReference>
<dbReference type="GeneID" id="13090"/>
<dbReference type="KEGG" id="mmu:13090"/>
<dbReference type="UCSC" id="uc009fus.2">
    <property type="organism name" value="mouse"/>
</dbReference>
<dbReference type="AGR" id="MGI:107303"/>
<dbReference type="CTD" id="13090"/>
<dbReference type="MGI" id="MGI:107303">
    <property type="gene designation" value="Cyp2b19"/>
</dbReference>
<dbReference type="VEuPathDB" id="HostDB:ENSMUSG00000066704"/>
<dbReference type="eggNOG" id="KOG0156">
    <property type="taxonomic scope" value="Eukaryota"/>
</dbReference>
<dbReference type="GeneTree" id="ENSGT00940000161658"/>
<dbReference type="HOGENOM" id="CLU_001570_22_3_1"/>
<dbReference type="InParanoid" id="O55071"/>
<dbReference type="OMA" id="IGHRVEK"/>
<dbReference type="OrthoDB" id="1055148at2759"/>
<dbReference type="PhylomeDB" id="O55071"/>
<dbReference type="TreeFam" id="TF352043"/>
<dbReference type="BioGRID-ORCS" id="13090">
    <property type="hits" value="4 hits in 62 CRISPR screens"/>
</dbReference>
<dbReference type="PRO" id="PR:O55071"/>
<dbReference type="Proteomes" id="UP000000589">
    <property type="component" value="Chromosome 7"/>
</dbReference>
<dbReference type="RNAct" id="O55071">
    <property type="molecule type" value="protein"/>
</dbReference>
<dbReference type="Bgee" id="ENSMUSG00000066704">
    <property type="expression patterns" value="Expressed in tail skin and 40 other cell types or tissues"/>
</dbReference>
<dbReference type="GO" id="GO:0005789">
    <property type="term" value="C:endoplasmic reticulum membrane"/>
    <property type="evidence" value="ECO:0007669"/>
    <property type="project" value="UniProtKB-SubCell"/>
</dbReference>
<dbReference type="GO" id="GO:0020037">
    <property type="term" value="F:heme binding"/>
    <property type="evidence" value="ECO:0007669"/>
    <property type="project" value="InterPro"/>
</dbReference>
<dbReference type="GO" id="GO:0005506">
    <property type="term" value="F:iron ion binding"/>
    <property type="evidence" value="ECO:0007669"/>
    <property type="project" value="InterPro"/>
</dbReference>
<dbReference type="GO" id="GO:0016712">
    <property type="term" value="F:oxidoreductase activity, acting on paired donors, with incorporation or reduction of molecular oxygen, reduced flavin or flavoprotein as one donor, and incorporation of one atom of oxygen"/>
    <property type="evidence" value="ECO:0007669"/>
    <property type="project" value="UniProtKB-EC"/>
</dbReference>
<dbReference type="CDD" id="cd20672">
    <property type="entry name" value="CYP2B"/>
    <property type="match status" value="1"/>
</dbReference>
<dbReference type="FunFam" id="1.10.630.10:FF:000001">
    <property type="entry name" value="Cytochrome P450, family 2"/>
    <property type="match status" value="1"/>
</dbReference>
<dbReference type="Gene3D" id="1.10.630.10">
    <property type="entry name" value="Cytochrome P450"/>
    <property type="match status" value="1"/>
</dbReference>
<dbReference type="InterPro" id="IPR001128">
    <property type="entry name" value="Cyt_P450"/>
</dbReference>
<dbReference type="InterPro" id="IPR017972">
    <property type="entry name" value="Cyt_P450_CS"/>
</dbReference>
<dbReference type="InterPro" id="IPR002401">
    <property type="entry name" value="Cyt_P450_E_grp-I"/>
</dbReference>
<dbReference type="InterPro" id="IPR008068">
    <property type="entry name" value="Cyt_P450_E_grp-I_CYP2B-like"/>
</dbReference>
<dbReference type="InterPro" id="IPR036396">
    <property type="entry name" value="Cyt_P450_sf"/>
</dbReference>
<dbReference type="InterPro" id="IPR050182">
    <property type="entry name" value="Cytochrome_P450_fam2"/>
</dbReference>
<dbReference type="PANTHER" id="PTHR24300">
    <property type="entry name" value="CYTOCHROME P450 508A4-RELATED"/>
    <property type="match status" value="1"/>
</dbReference>
<dbReference type="PANTHER" id="PTHR24300:SF277">
    <property type="entry name" value="CYTOCHROME P450-RELATED"/>
    <property type="match status" value="1"/>
</dbReference>
<dbReference type="Pfam" id="PF00067">
    <property type="entry name" value="p450"/>
    <property type="match status" value="1"/>
</dbReference>
<dbReference type="PRINTS" id="PR00463">
    <property type="entry name" value="EP450I"/>
</dbReference>
<dbReference type="PRINTS" id="PR01685">
    <property type="entry name" value="EP450ICYP2B"/>
</dbReference>
<dbReference type="PRINTS" id="PR00385">
    <property type="entry name" value="P450"/>
</dbReference>
<dbReference type="SUPFAM" id="SSF48264">
    <property type="entry name" value="Cytochrome P450"/>
    <property type="match status" value="1"/>
</dbReference>
<dbReference type="PROSITE" id="PS00086">
    <property type="entry name" value="CYTOCHROME_P450"/>
    <property type="match status" value="1"/>
</dbReference>
<keyword id="KW-0256">Endoplasmic reticulum</keyword>
<keyword id="KW-0349">Heme</keyword>
<keyword id="KW-0408">Iron</keyword>
<keyword id="KW-0472">Membrane</keyword>
<keyword id="KW-0479">Metal-binding</keyword>
<keyword id="KW-0492">Microsome</keyword>
<keyword id="KW-0503">Monooxygenase</keyword>
<keyword id="KW-0560">Oxidoreductase</keyword>
<keyword id="KW-0597">Phosphoprotein</keyword>
<keyword id="KW-1185">Reference proteome</keyword>
<comment type="function">
    <text>Cytochromes P450 are a group of heme-thiolate monooxygenases. In liver microsomes, this enzyme is involved in an NADPH-dependent electron transport pathway. It oxidizes a variety of structurally unrelated compounds, including steroids, fatty acids, and xenobiotics.</text>
</comment>
<comment type="catalytic activity">
    <reaction>
        <text>an organic molecule + reduced [NADPH--hemoprotein reductase] + O2 = an alcohol + oxidized [NADPH--hemoprotein reductase] + H2O + H(+)</text>
        <dbReference type="Rhea" id="RHEA:17149"/>
        <dbReference type="Rhea" id="RHEA-COMP:11964"/>
        <dbReference type="Rhea" id="RHEA-COMP:11965"/>
        <dbReference type="ChEBI" id="CHEBI:15377"/>
        <dbReference type="ChEBI" id="CHEBI:15378"/>
        <dbReference type="ChEBI" id="CHEBI:15379"/>
        <dbReference type="ChEBI" id="CHEBI:30879"/>
        <dbReference type="ChEBI" id="CHEBI:57618"/>
        <dbReference type="ChEBI" id="CHEBI:58210"/>
        <dbReference type="ChEBI" id="CHEBI:142491"/>
        <dbReference type="EC" id="1.14.14.1"/>
    </reaction>
</comment>
<comment type="cofactor">
    <cofactor evidence="1">
        <name>heme</name>
        <dbReference type="ChEBI" id="CHEBI:30413"/>
    </cofactor>
</comment>
<comment type="subcellular location">
    <subcellularLocation>
        <location>Endoplasmic reticulum membrane</location>
        <topology>Peripheral membrane protein</topology>
    </subcellularLocation>
    <subcellularLocation>
        <location>Microsome membrane</location>
        <topology>Peripheral membrane protein</topology>
    </subcellularLocation>
</comment>
<comment type="tissue specificity">
    <text>Expressed only in differentiated keratinocytes in skin.</text>
</comment>
<comment type="similarity">
    <text evidence="3">Belongs to the cytochrome P450 family.</text>
</comment>
<accession>O55071</accession>
<accession>B2RQK1</accession>
<sequence>MEFSVLLLLALTTGFLIFLVSQSQPKTHGHFPPGPRPLPFLGNLLQMDRRGLLSSFIQLQEKYGDVFTVHLGPRPVVMLCGTDTIREALVNQAEAFSGRGTVAVLDPIVQGYGVIFSSGERWKTLRRFSLATMRDFGMGKRSVEERIKEEAQCLVEELKKYKGAPLNPTFYFQCIVANIICSIVFGERFDYKDHQFLHLLNLIYQTFSLMSSLSSQVFELFSAILKYFPGAHRQISKNLQEILDYIGHSVEKHRATLDPSAPRDFIDTYLLRMEKEKSNHHTEFHHQNLVISVLSLFFAGTETTSTTLRYSFLIMLKYPHVAEKVQKEIDQVIGSHRLPTLDDRTKMPYTDAVIHEIQRFTDLAPIGLPHKVTKDTLFRGYLIPKNTEVYPILSSALHDPRYFEQPDSFNPEHFLDANGALKTNEAFMPFSTGKRICLGEGIARNELFLFFTTILQNFSLASPVAPENIDLIPNNSGATKTPPQYQIHFLSR</sequence>
<evidence type="ECO:0000250" key="1"/>
<evidence type="ECO:0000250" key="2">
    <source>
        <dbReference type="UniProtKB" id="P00176"/>
    </source>
</evidence>
<evidence type="ECO:0000305" key="3"/>
<proteinExistence type="evidence at transcript level"/>